<proteinExistence type="evidence at transcript level"/>
<gene>
    <name type="primary">GT4</name>
    <name type="synonym">UGT73A4</name>
</gene>
<feature type="chain" id="PRO_0000074145" description="Anthocyanidin 3-O-glucosyltransferase 4">
    <location>
        <begin position="1" status="less than"/>
        <end position="241"/>
    </location>
</feature>
<feature type="binding site" evidence="2">
    <location>
        <position position="104"/>
    </location>
    <ligand>
        <name>UDP-alpha-D-glucose</name>
        <dbReference type="ChEBI" id="CHEBI:58885"/>
    </ligand>
</feature>
<feature type="binding site" evidence="2">
    <location>
        <position position="119"/>
    </location>
    <ligand>
        <name>UDP-alpha-D-glucose</name>
        <dbReference type="ChEBI" id="CHEBI:58885"/>
    </ligand>
</feature>
<feature type="binding site" evidence="2">
    <location>
        <position position="122"/>
    </location>
    <ligand>
        <name>UDP-alpha-D-glucose</name>
        <dbReference type="ChEBI" id="CHEBI:58885"/>
    </ligand>
</feature>
<feature type="binding site" evidence="2">
    <location>
        <position position="123"/>
    </location>
    <ligand>
        <name>UDP-alpha-D-glucose</name>
        <dbReference type="ChEBI" id="CHEBI:58885"/>
    </ligand>
</feature>
<feature type="binding site" evidence="2">
    <location>
        <position position="124"/>
    </location>
    <ligand>
        <name>UDP-alpha-D-glucose</name>
        <dbReference type="ChEBI" id="CHEBI:58885"/>
    </ligand>
</feature>
<feature type="binding site" evidence="2">
    <location>
        <position position="127"/>
    </location>
    <ligand>
        <name>UDP-alpha-D-glucose</name>
        <dbReference type="ChEBI" id="CHEBI:58885"/>
    </ligand>
</feature>
<feature type="binding site" evidence="3">
    <location>
        <position position="142"/>
    </location>
    <ligand>
        <name>an anthocyanidin</name>
        <dbReference type="ChEBI" id="CHEBI:143576"/>
    </ligand>
</feature>
<feature type="binding site" evidence="2">
    <location>
        <position position="143"/>
    </location>
    <ligand>
        <name>UDP-alpha-D-glucose</name>
        <dbReference type="ChEBI" id="CHEBI:58885"/>
    </ligand>
</feature>
<feature type="binding site" evidence="2">
    <location>
        <position position="144"/>
    </location>
    <ligand>
        <name>UDP-alpha-D-glucose</name>
        <dbReference type="ChEBI" id="CHEBI:58885"/>
    </ligand>
</feature>
<feature type="non-terminal residue">
    <location>
        <position position="1"/>
    </location>
</feature>
<dbReference type="EC" id="2.4.1.115"/>
<dbReference type="EMBL" id="X77460">
    <property type="protein sequence ID" value="CAA54610.1"/>
    <property type="molecule type" value="mRNA"/>
</dbReference>
<dbReference type="SMR" id="Q40286"/>
<dbReference type="CAZy" id="GT1">
    <property type="family name" value="Glycosyltransferase Family 1"/>
</dbReference>
<dbReference type="UniPathway" id="UPA00009"/>
<dbReference type="GO" id="GO:0047213">
    <property type="term" value="F:anthocyanidin 3-O-glucosyltransferase activity"/>
    <property type="evidence" value="ECO:0007669"/>
    <property type="project" value="UniProtKB-EC"/>
</dbReference>
<dbReference type="GO" id="GO:0009718">
    <property type="term" value="P:anthocyanin-containing compound biosynthetic process"/>
    <property type="evidence" value="ECO:0007669"/>
    <property type="project" value="UniProtKB-UniPathway"/>
</dbReference>
<dbReference type="CDD" id="cd03784">
    <property type="entry name" value="GT1_Gtf-like"/>
    <property type="match status" value="1"/>
</dbReference>
<dbReference type="FunFam" id="3.40.50.2000:FF:000047">
    <property type="entry name" value="Glycosyltransferase"/>
    <property type="match status" value="1"/>
</dbReference>
<dbReference type="Gene3D" id="3.40.50.2000">
    <property type="entry name" value="Glycogen Phosphorylase B"/>
    <property type="match status" value="1"/>
</dbReference>
<dbReference type="InterPro" id="IPR002213">
    <property type="entry name" value="UDP_glucos_trans"/>
</dbReference>
<dbReference type="InterPro" id="IPR035595">
    <property type="entry name" value="UDP_glycos_trans_CS"/>
</dbReference>
<dbReference type="PANTHER" id="PTHR48047">
    <property type="entry name" value="GLYCOSYLTRANSFERASE"/>
    <property type="match status" value="1"/>
</dbReference>
<dbReference type="PANTHER" id="PTHR48047:SF237">
    <property type="entry name" value="UDP-GLYCOSYLTRANSFERASE 73C3-LIKE"/>
    <property type="match status" value="1"/>
</dbReference>
<dbReference type="Pfam" id="PF00201">
    <property type="entry name" value="UDPGT"/>
    <property type="match status" value="1"/>
</dbReference>
<dbReference type="SUPFAM" id="SSF53756">
    <property type="entry name" value="UDP-Glycosyltransferase/glycogen phosphorylase"/>
    <property type="match status" value="1"/>
</dbReference>
<dbReference type="PROSITE" id="PS00375">
    <property type="entry name" value="UDPGT"/>
    <property type="match status" value="1"/>
</dbReference>
<protein>
    <recommendedName>
        <fullName>Anthocyanidin 3-O-glucosyltransferase 4</fullName>
        <ecNumber>2.4.1.115</ecNumber>
    </recommendedName>
    <alternativeName>
        <fullName>Flavonol 3-O-glucosyltransferase 4</fullName>
    </alternativeName>
    <alternativeName>
        <fullName>UDP-glucose flavonoid 3-O-glucosyltransferase 4</fullName>
    </alternativeName>
</protein>
<accession>Q40286</accession>
<name>UFOG4_MANES</name>
<evidence type="ECO:0000250" key="1"/>
<evidence type="ECO:0000250" key="2">
    <source>
        <dbReference type="UniProtKB" id="A0A0A1HA03"/>
    </source>
</evidence>
<evidence type="ECO:0000250" key="3">
    <source>
        <dbReference type="UniProtKB" id="P51094"/>
    </source>
</evidence>
<evidence type="ECO:0000305" key="4"/>
<keyword id="KW-0328">Glycosyltransferase</keyword>
<keyword id="KW-0808">Transferase</keyword>
<comment type="function">
    <text evidence="1">In the presence of other necessary color factors, this glycosylation reaction allows the accumulation of anthocyanin pigments.</text>
</comment>
<comment type="catalytic activity">
    <reaction>
        <text>an anthocyanidin + UDP-alpha-D-glucose + H(+) = an anthocyanidin 3-O-beta-D-glucoside + UDP</text>
        <dbReference type="Rhea" id="RHEA:20093"/>
        <dbReference type="ChEBI" id="CHEBI:15378"/>
        <dbReference type="ChEBI" id="CHEBI:16307"/>
        <dbReference type="ChEBI" id="CHEBI:58223"/>
        <dbReference type="ChEBI" id="CHEBI:58885"/>
        <dbReference type="ChEBI" id="CHEBI:143576"/>
        <dbReference type="EC" id="2.4.1.115"/>
    </reaction>
</comment>
<comment type="pathway">
    <text>Pigment biosynthesis; anthocyanin biosynthesis.</text>
</comment>
<comment type="tissue specificity">
    <text>Faintly expressed in cotyledons, roots and leaves.</text>
</comment>
<comment type="developmental stage">
    <text>Rare transcripts expressed in cotyledon and roots during the development.</text>
</comment>
<comment type="similarity">
    <text evidence="4">Belongs to the UDP-glycosyltransferase family.</text>
</comment>
<reference key="1">
    <citation type="journal article" date="1994" name="DNA Seq.">
        <title>Multiple secondary plant product UDP-glucose glucosyltransferase genes expressed in cassava (Manihot esculenta Crantz) cotyledons.</title>
        <authorList>
            <person name="Hughes J."/>
            <person name="Hughes M.A."/>
        </authorList>
    </citation>
    <scope>NUCLEOTIDE SEQUENCE [MRNA]</scope>
    <source>
        <tissue>Cotyledon</tissue>
    </source>
</reference>
<organism>
    <name type="scientific">Manihot esculenta</name>
    <name type="common">Cassava</name>
    <name type="synonym">Jatropha manihot</name>
    <dbReference type="NCBI Taxonomy" id="3983"/>
    <lineage>
        <taxon>Eukaryota</taxon>
        <taxon>Viridiplantae</taxon>
        <taxon>Streptophyta</taxon>
        <taxon>Embryophyta</taxon>
        <taxon>Tracheophyta</taxon>
        <taxon>Spermatophyta</taxon>
        <taxon>Magnoliopsida</taxon>
        <taxon>eudicotyledons</taxon>
        <taxon>Gunneridae</taxon>
        <taxon>Pentapetalae</taxon>
        <taxon>rosids</taxon>
        <taxon>fabids</taxon>
        <taxon>Malpighiales</taxon>
        <taxon>Euphorbiaceae</taxon>
        <taxon>Crotonoideae</taxon>
        <taxon>Manihoteae</taxon>
        <taxon>Manihot</taxon>
    </lineage>
</organism>
<sequence length="241" mass="27068">CNKLKLDKAERGDKASVDNTELLKWLDLWEPGSVIYACLGSISGLTSWQLAELGLGLESTNQPFIWVIREGEKSEGLEKWILEEGYEERKRKREDFWIRGWSPQVLILSHPAIGAFFTHCGWNSTLEGISAGVPIVACPLFAEQFYNEKLVVEVLGIGVSVGVEAAVTWGLEDKCGAVMKKEQVKKAIEIVMDKGKEGEERRRRAREIGEMAKRTIEEGGSSYLDMEMLIQYVSERSPSRA</sequence>